<gene>
    <name evidence="1" type="primary">lexA</name>
    <name type="ordered locus">PA3007</name>
</gene>
<name>LEXA_PSEAE</name>
<reference key="1">
    <citation type="journal article" date="1992" name="Mol. Gen. Genet.">
        <title>Nucleotide sequence analysis and comparison of the lexA genes from Salmonella typhimurium, Erwinia carotovora, Pseudomonas aeruginosa and Pseudomonas putida.</title>
        <authorList>
            <person name="Garriga X."/>
            <person name="Calero S."/>
            <person name="Barbe J."/>
        </authorList>
    </citation>
    <scope>NUCLEOTIDE SEQUENCE [GENOMIC DNA]</scope>
    <source>
        <strain>PAO</strain>
    </source>
</reference>
<reference key="2">
    <citation type="journal article" date="2000" name="Nature">
        <title>Complete genome sequence of Pseudomonas aeruginosa PAO1, an opportunistic pathogen.</title>
        <authorList>
            <person name="Stover C.K."/>
            <person name="Pham X.-Q.T."/>
            <person name="Erwin A.L."/>
            <person name="Mizoguchi S.D."/>
            <person name="Warrener P."/>
            <person name="Hickey M.J."/>
            <person name="Brinkman F.S.L."/>
            <person name="Hufnagle W.O."/>
            <person name="Kowalik D.J."/>
            <person name="Lagrou M."/>
            <person name="Garber R.L."/>
            <person name="Goltry L."/>
            <person name="Tolentino E."/>
            <person name="Westbrock-Wadman S."/>
            <person name="Yuan Y."/>
            <person name="Brody L.L."/>
            <person name="Coulter S.N."/>
            <person name="Folger K.R."/>
            <person name="Kas A."/>
            <person name="Larbig K."/>
            <person name="Lim R.M."/>
            <person name="Smith K.A."/>
            <person name="Spencer D.H."/>
            <person name="Wong G.K.-S."/>
            <person name="Wu Z."/>
            <person name="Paulsen I.T."/>
            <person name="Reizer J."/>
            <person name="Saier M.H. Jr."/>
            <person name="Hancock R.E.W."/>
            <person name="Lory S."/>
            <person name="Olson M.V."/>
        </authorList>
    </citation>
    <scope>NUCLEOTIDE SEQUENCE [LARGE SCALE GENOMIC DNA]</scope>
    <source>
        <strain>ATCC 15692 / DSM 22644 / CIP 104116 / JCM 14847 / LMG 12228 / 1C / PRS 101 / PAO1</strain>
    </source>
</reference>
<sequence>MQKLTPRQAEILSFIKRCLEDHGFPPTRAEIAQELGFKSPNAAEEHLKALARKGAIEMTPGASRGIRIPGFEPHAANDDEGLPVIGRVAAGAPILAEQNIEESCRINPAFFNPRADYLLRVRGMSMKDIGILDGDLLAVHVTREARNGQVVVARIGEEVTVKRFKREGSKVWLLAENPEFAPIEVDLKEQELIIEGLSVGVIRR</sequence>
<organism>
    <name type="scientific">Pseudomonas aeruginosa (strain ATCC 15692 / DSM 22644 / CIP 104116 / JCM 14847 / LMG 12228 / 1C / PRS 101 / PAO1)</name>
    <dbReference type="NCBI Taxonomy" id="208964"/>
    <lineage>
        <taxon>Bacteria</taxon>
        <taxon>Pseudomonadati</taxon>
        <taxon>Pseudomonadota</taxon>
        <taxon>Gammaproteobacteria</taxon>
        <taxon>Pseudomonadales</taxon>
        <taxon>Pseudomonadaceae</taxon>
        <taxon>Pseudomonas</taxon>
    </lineage>
</organism>
<dbReference type="EC" id="3.4.21.88" evidence="1"/>
<dbReference type="EMBL" id="X63018">
    <property type="protein sequence ID" value="CAA44750.1"/>
    <property type="molecule type" value="Genomic_DNA"/>
</dbReference>
<dbReference type="EMBL" id="AE004091">
    <property type="protein sequence ID" value="AAG06395.1"/>
    <property type="molecule type" value="Genomic_DNA"/>
</dbReference>
<dbReference type="PIR" id="S30165">
    <property type="entry name" value="S30165"/>
</dbReference>
<dbReference type="RefSeq" id="NP_251697.1">
    <property type="nucleotide sequence ID" value="NC_002516.2"/>
</dbReference>
<dbReference type="RefSeq" id="WP_003091196.1">
    <property type="nucleotide sequence ID" value="NZ_QZGE01000009.1"/>
</dbReference>
<dbReference type="PDB" id="8B0V">
    <property type="method" value="X-ray"/>
    <property type="resolution" value="1.70 A"/>
    <property type="chains" value="A/B=81-204"/>
</dbReference>
<dbReference type="PDB" id="8S7G">
    <property type="method" value="EM"/>
    <property type="resolution" value="3.43 A"/>
    <property type="chains" value="A/B=2-204"/>
</dbReference>
<dbReference type="PDBsum" id="8B0V"/>
<dbReference type="PDBsum" id="8S7G"/>
<dbReference type="EMDB" id="EMD-19771"/>
<dbReference type="SMR" id="P37452"/>
<dbReference type="FunCoup" id="P37452">
    <property type="interactions" value="392"/>
</dbReference>
<dbReference type="STRING" id="208964.PA3007"/>
<dbReference type="MEROPS" id="S24.001"/>
<dbReference type="PaxDb" id="208964-PA3007"/>
<dbReference type="DNASU" id="879875"/>
<dbReference type="GeneID" id="879875"/>
<dbReference type="KEGG" id="pae:PA3007"/>
<dbReference type="PATRIC" id="fig|208964.12.peg.3155"/>
<dbReference type="PseudoCAP" id="PA3007"/>
<dbReference type="HOGENOM" id="CLU_066192_45_3_6"/>
<dbReference type="InParanoid" id="P37452"/>
<dbReference type="OrthoDB" id="9802364at2"/>
<dbReference type="PhylomeDB" id="P37452"/>
<dbReference type="BioCyc" id="PAER208964:G1FZ6-3059-MONOMER"/>
<dbReference type="BRENDA" id="3.4.21.88">
    <property type="organism ID" value="5087"/>
</dbReference>
<dbReference type="Proteomes" id="UP000002438">
    <property type="component" value="Chromosome"/>
</dbReference>
<dbReference type="CollecTF" id="EXPREG_00000a60"/>
<dbReference type="GO" id="GO:0032993">
    <property type="term" value="C:protein-DNA complex"/>
    <property type="evidence" value="ECO:0000318"/>
    <property type="project" value="GO_Central"/>
</dbReference>
<dbReference type="GO" id="GO:0001217">
    <property type="term" value="F:DNA-binding transcription repressor activity"/>
    <property type="evidence" value="ECO:0000318"/>
    <property type="project" value="GO_Central"/>
</dbReference>
<dbReference type="GO" id="GO:0043565">
    <property type="term" value="F:sequence-specific DNA binding"/>
    <property type="evidence" value="ECO:0000318"/>
    <property type="project" value="GO_Central"/>
</dbReference>
<dbReference type="GO" id="GO:0004252">
    <property type="term" value="F:serine-type endopeptidase activity"/>
    <property type="evidence" value="ECO:0007669"/>
    <property type="project" value="UniProtKB-UniRule"/>
</dbReference>
<dbReference type="GO" id="GO:0006281">
    <property type="term" value="P:DNA repair"/>
    <property type="evidence" value="ECO:0007669"/>
    <property type="project" value="UniProtKB-UniRule"/>
</dbReference>
<dbReference type="GO" id="GO:0006260">
    <property type="term" value="P:DNA replication"/>
    <property type="evidence" value="ECO:0007669"/>
    <property type="project" value="UniProtKB-UniRule"/>
</dbReference>
<dbReference type="GO" id="GO:0045892">
    <property type="term" value="P:negative regulation of DNA-templated transcription"/>
    <property type="evidence" value="ECO:0000269"/>
    <property type="project" value="CollecTF"/>
</dbReference>
<dbReference type="GO" id="GO:0006508">
    <property type="term" value="P:proteolysis"/>
    <property type="evidence" value="ECO:0007669"/>
    <property type="project" value="InterPro"/>
</dbReference>
<dbReference type="GO" id="GO:0006355">
    <property type="term" value="P:regulation of DNA-templated transcription"/>
    <property type="evidence" value="ECO:0000314"/>
    <property type="project" value="PseudoCAP"/>
</dbReference>
<dbReference type="GO" id="GO:0009432">
    <property type="term" value="P:SOS response"/>
    <property type="evidence" value="ECO:0000269"/>
    <property type="project" value="CollecTF"/>
</dbReference>
<dbReference type="CDD" id="cd06529">
    <property type="entry name" value="S24_LexA-like"/>
    <property type="match status" value="1"/>
</dbReference>
<dbReference type="FunFam" id="1.10.10.10:FF:000009">
    <property type="entry name" value="LexA repressor"/>
    <property type="match status" value="1"/>
</dbReference>
<dbReference type="FunFam" id="2.10.109.10:FF:000001">
    <property type="entry name" value="LexA repressor"/>
    <property type="match status" value="1"/>
</dbReference>
<dbReference type="Gene3D" id="2.10.109.10">
    <property type="entry name" value="Umud Fragment, subunit A"/>
    <property type="match status" value="1"/>
</dbReference>
<dbReference type="Gene3D" id="1.10.10.10">
    <property type="entry name" value="Winged helix-like DNA-binding domain superfamily/Winged helix DNA-binding domain"/>
    <property type="match status" value="1"/>
</dbReference>
<dbReference type="HAMAP" id="MF_00015">
    <property type="entry name" value="LexA"/>
    <property type="match status" value="1"/>
</dbReference>
<dbReference type="InterPro" id="IPR006200">
    <property type="entry name" value="LexA"/>
</dbReference>
<dbReference type="InterPro" id="IPR039418">
    <property type="entry name" value="LexA-like"/>
</dbReference>
<dbReference type="InterPro" id="IPR036286">
    <property type="entry name" value="LexA/Signal_pep-like_sf"/>
</dbReference>
<dbReference type="InterPro" id="IPR006199">
    <property type="entry name" value="LexA_DNA-bd_dom"/>
</dbReference>
<dbReference type="InterPro" id="IPR050077">
    <property type="entry name" value="LexA_repressor"/>
</dbReference>
<dbReference type="InterPro" id="IPR006197">
    <property type="entry name" value="Peptidase_S24_LexA"/>
</dbReference>
<dbReference type="InterPro" id="IPR015927">
    <property type="entry name" value="Peptidase_S24_S26A/B/C"/>
</dbReference>
<dbReference type="InterPro" id="IPR036388">
    <property type="entry name" value="WH-like_DNA-bd_sf"/>
</dbReference>
<dbReference type="InterPro" id="IPR036390">
    <property type="entry name" value="WH_DNA-bd_sf"/>
</dbReference>
<dbReference type="NCBIfam" id="TIGR00498">
    <property type="entry name" value="lexA"/>
    <property type="match status" value="1"/>
</dbReference>
<dbReference type="PANTHER" id="PTHR33516">
    <property type="entry name" value="LEXA REPRESSOR"/>
    <property type="match status" value="1"/>
</dbReference>
<dbReference type="PANTHER" id="PTHR33516:SF2">
    <property type="entry name" value="LEXA REPRESSOR-RELATED"/>
    <property type="match status" value="1"/>
</dbReference>
<dbReference type="Pfam" id="PF01726">
    <property type="entry name" value="LexA_DNA_bind"/>
    <property type="match status" value="1"/>
</dbReference>
<dbReference type="Pfam" id="PF00717">
    <property type="entry name" value="Peptidase_S24"/>
    <property type="match status" value="1"/>
</dbReference>
<dbReference type="PRINTS" id="PR00726">
    <property type="entry name" value="LEXASERPTASE"/>
</dbReference>
<dbReference type="SUPFAM" id="SSF51306">
    <property type="entry name" value="LexA/Signal peptidase"/>
    <property type="match status" value="1"/>
</dbReference>
<dbReference type="SUPFAM" id="SSF46785">
    <property type="entry name" value="Winged helix' DNA-binding domain"/>
    <property type="match status" value="1"/>
</dbReference>
<keyword id="KW-0002">3D-structure</keyword>
<keyword id="KW-0068">Autocatalytic cleavage</keyword>
<keyword id="KW-0227">DNA damage</keyword>
<keyword id="KW-0234">DNA repair</keyword>
<keyword id="KW-0235">DNA replication</keyword>
<keyword id="KW-0238">DNA-binding</keyword>
<keyword id="KW-0378">Hydrolase</keyword>
<keyword id="KW-1185">Reference proteome</keyword>
<keyword id="KW-0678">Repressor</keyword>
<keyword id="KW-0742">SOS response</keyword>
<keyword id="KW-0804">Transcription</keyword>
<keyword id="KW-0805">Transcription regulation</keyword>
<evidence type="ECO:0000255" key="1">
    <source>
        <dbReference type="HAMAP-Rule" id="MF_00015"/>
    </source>
</evidence>
<evidence type="ECO:0007829" key="2">
    <source>
        <dbReference type="PDB" id="8B0V"/>
    </source>
</evidence>
<accession>P37452</accession>
<protein>
    <recommendedName>
        <fullName evidence="1">LexA repressor</fullName>
        <ecNumber evidence="1">3.4.21.88</ecNumber>
    </recommendedName>
</protein>
<comment type="function">
    <text evidence="1">Represses a number of genes involved in the response to DNA damage (SOS response), including recA and lexA. In the presence of single-stranded DNA, RecA interacts with LexA causing an autocatalytic cleavage which disrupts the DNA-binding part of LexA, leading to derepression of the SOS regulon and eventually DNA repair.</text>
</comment>
<comment type="catalytic activity">
    <reaction evidence="1">
        <text>Hydrolysis of Ala-|-Gly bond in repressor LexA.</text>
        <dbReference type="EC" id="3.4.21.88"/>
    </reaction>
</comment>
<comment type="subunit">
    <text evidence="1">Homodimer.</text>
</comment>
<comment type="similarity">
    <text evidence="1">Belongs to the peptidase S24 family.</text>
</comment>
<feature type="chain" id="PRO_0000170067" description="LexA repressor">
    <location>
        <begin position="1"/>
        <end position="204"/>
    </location>
</feature>
<feature type="DNA-binding region" description="H-T-H motif" evidence="1">
    <location>
        <begin position="28"/>
        <end position="48"/>
    </location>
</feature>
<feature type="active site" description="For autocatalytic cleavage activity" evidence="1">
    <location>
        <position position="125"/>
    </location>
</feature>
<feature type="active site" description="For autocatalytic cleavage activity" evidence="1">
    <location>
        <position position="162"/>
    </location>
</feature>
<feature type="site" description="Cleavage; by autolysis" evidence="1">
    <location>
        <begin position="90"/>
        <end position="91"/>
    </location>
</feature>
<feature type="strand" evidence="2">
    <location>
        <begin position="82"/>
        <end position="85"/>
    </location>
</feature>
<feature type="helix" evidence="2">
    <location>
        <begin position="97"/>
        <end position="99"/>
    </location>
</feature>
<feature type="strand" evidence="2">
    <location>
        <begin position="100"/>
        <end position="104"/>
    </location>
</feature>
<feature type="helix" evidence="2">
    <location>
        <begin position="108"/>
        <end position="110"/>
    </location>
</feature>
<feature type="strand" evidence="2">
    <location>
        <begin position="111"/>
        <end position="113"/>
    </location>
</feature>
<feature type="strand" evidence="2">
    <location>
        <begin position="117"/>
        <end position="120"/>
    </location>
</feature>
<feature type="helix" evidence="2">
    <location>
        <begin position="127"/>
        <end position="129"/>
    </location>
</feature>
<feature type="strand" evidence="2">
    <location>
        <begin position="136"/>
        <end position="140"/>
    </location>
</feature>
<feature type="strand" evidence="2">
    <location>
        <begin position="150"/>
        <end position="155"/>
    </location>
</feature>
<feature type="strand" evidence="2">
    <location>
        <begin position="158"/>
        <end position="167"/>
    </location>
</feature>
<feature type="strand" evidence="2">
    <location>
        <begin position="170"/>
        <end position="174"/>
    </location>
</feature>
<feature type="strand" evidence="2">
    <location>
        <begin position="183"/>
        <end position="186"/>
    </location>
</feature>
<feature type="turn" evidence="2">
    <location>
        <begin position="187"/>
        <end position="189"/>
    </location>
</feature>
<feature type="strand" evidence="2">
    <location>
        <begin position="192"/>
        <end position="202"/>
    </location>
</feature>
<proteinExistence type="evidence at protein level"/>